<protein>
    <recommendedName>
        <fullName>Anaphase-promoting complex subunit 9</fullName>
    </recommendedName>
</protein>
<organism>
    <name type="scientific">Saccharomyces cerevisiae (strain ATCC 204508 / S288c)</name>
    <name type="common">Baker's yeast</name>
    <dbReference type="NCBI Taxonomy" id="559292"/>
    <lineage>
        <taxon>Eukaryota</taxon>
        <taxon>Fungi</taxon>
        <taxon>Dikarya</taxon>
        <taxon>Ascomycota</taxon>
        <taxon>Saccharomycotina</taxon>
        <taxon>Saccharomycetes</taxon>
        <taxon>Saccharomycetales</taxon>
        <taxon>Saccharomycetaceae</taxon>
        <taxon>Saccharomyces</taxon>
    </lineage>
</organism>
<name>APC9_YEAST</name>
<sequence>MNQNGDKNEGKLFQLPSLPPWKTPRFNKANFNNFTTPLRKRSTRVINDDSMPITGEVLEERTADDLYGINMDVDEVDYLNTLSHIEEEKQYDYSPFCERNTLRESRIDSFLKAERAAHCLVFHKVGHLDGIDSYRPDIDIMCGEEANKYDSANPEGNGSMLLESVPGCNKEDLERLSRREFVTNSKPNMRRLDDIINHETNALKSFWNDSGLVNSLQSHHLHEEYLLLQEELKNVYKIKCHDRVPIESLRDKCRRHYSNEDSSFL</sequence>
<reference key="1">
    <citation type="journal article" date="1997" name="Nature">
        <title>The nucleotide sequence of Saccharomyces cerevisiae chromosome XII.</title>
        <authorList>
            <person name="Johnston M."/>
            <person name="Hillier L.W."/>
            <person name="Riles L."/>
            <person name="Albermann K."/>
            <person name="Andre B."/>
            <person name="Ansorge W."/>
            <person name="Benes V."/>
            <person name="Brueckner M."/>
            <person name="Delius H."/>
            <person name="Dubois E."/>
            <person name="Duesterhoeft A."/>
            <person name="Entian K.-D."/>
            <person name="Floeth M."/>
            <person name="Goffeau A."/>
            <person name="Hebling U."/>
            <person name="Heumann K."/>
            <person name="Heuss-Neitzel D."/>
            <person name="Hilbert H."/>
            <person name="Hilger F."/>
            <person name="Kleine K."/>
            <person name="Koetter P."/>
            <person name="Louis E.J."/>
            <person name="Messenguy F."/>
            <person name="Mewes H.-W."/>
            <person name="Miosga T."/>
            <person name="Moestl D."/>
            <person name="Mueller-Auer S."/>
            <person name="Nentwich U."/>
            <person name="Obermaier B."/>
            <person name="Piravandi E."/>
            <person name="Pohl T.M."/>
            <person name="Portetelle D."/>
            <person name="Purnelle B."/>
            <person name="Rechmann S."/>
            <person name="Rieger M."/>
            <person name="Rinke M."/>
            <person name="Rose M."/>
            <person name="Scharfe M."/>
            <person name="Scherens B."/>
            <person name="Scholler P."/>
            <person name="Schwager C."/>
            <person name="Schwarz S."/>
            <person name="Underwood A.P."/>
            <person name="Urrestarazu L.A."/>
            <person name="Vandenbol M."/>
            <person name="Verhasselt P."/>
            <person name="Vierendeels F."/>
            <person name="Voet M."/>
            <person name="Volckaert G."/>
            <person name="Voss H."/>
            <person name="Wambutt R."/>
            <person name="Wedler E."/>
            <person name="Wedler H."/>
            <person name="Zimmermann F.K."/>
            <person name="Zollner A."/>
            <person name="Hani J."/>
            <person name="Hoheisel J.D."/>
        </authorList>
    </citation>
    <scope>NUCLEOTIDE SEQUENCE [LARGE SCALE GENOMIC DNA]</scope>
    <source>
        <strain>ATCC 204508 / S288c</strain>
    </source>
</reference>
<reference key="2">
    <citation type="journal article" date="2014" name="G3 (Bethesda)">
        <title>The reference genome sequence of Saccharomyces cerevisiae: Then and now.</title>
        <authorList>
            <person name="Engel S.R."/>
            <person name="Dietrich F.S."/>
            <person name="Fisk D.G."/>
            <person name="Binkley G."/>
            <person name="Balakrishnan R."/>
            <person name="Costanzo M.C."/>
            <person name="Dwight S.S."/>
            <person name="Hitz B.C."/>
            <person name="Karra K."/>
            <person name="Nash R.S."/>
            <person name="Weng S."/>
            <person name="Wong E.D."/>
            <person name="Lloyd P."/>
            <person name="Skrzypek M.S."/>
            <person name="Miyasato S.R."/>
            <person name="Simison M."/>
            <person name="Cherry J.M."/>
        </authorList>
    </citation>
    <scope>GENOME REANNOTATION</scope>
    <source>
        <strain>ATCC 204508 / S288c</strain>
    </source>
</reference>
<reference key="3">
    <citation type="journal article" date="1998" name="Science">
        <title>Mass spectrometric analysis of the anaphase-promoting complex from yeast: identification of a subunit related to cullins.</title>
        <authorList>
            <person name="Zachariae W."/>
            <person name="Shevchenko A."/>
            <person name="Andrews P.D."/>
            <person name="Ciosk R."/>
            <person name="Galova M."/>
            <person name="Stark M.J."/>
            <person name="Mann M."/>
            <person name="Nasmyth K."/>
        </authorList>
    </citation>
    <scope>IDENTIFICATION BY MASS SPECTROMETRY</scope>
    <scope>FUNCTION</scope>
    <scope>SUBUNIT</scope>
</reference>
<reference key="4">
    <citation type="journal article" date="2003" name="Nature">
        <title>Global analysis of protein localization in budding yeast.</title>
        <authorList>
            <person name="Huh W.-K."/>
            <person name="Falvo J.V."/>
            <person name="Gerke L.C."/>
            <person name="Carroll A.S."/>
            <person name="Howson R.W."/>
            <person name="Weissman J.S."/>
            <person name="O'Shea E.K."/>
        </authorList>
    </citation>
    <scope>SUBCELLULAR LOCATION [LARGE SCALE ANALYSIS]</scope>
</reference>
<keyword id="KW-0002">3D-structure</keyword>
<keyword id="KW-0131">Cell cycle</keyword>
<keyword id="KW-0132">Cell division</keyword>
<keyword id="KW-0963">Cytoplasm</keyword>
<keyword id="KW-0498">Mitosis</keyword>
<keyword id="KW-0539">Nucleus</keyword>
<keyword id="KW-1185">Reference proteome</keyword>
<keyword id="KW-0833">Ubl conjugation pathway</keyword>
<gene>
    <name type="primary">APC9</name>
    <name type="ordered locus">YLR102C</name>
</gene>
<feature type="chain" id="PRO_0000064626" description="Anaphase-promoting complex subunit 9">
    <location>
        <begin position="1"/>
        <end position="265"/>
    </location>
</feature>
<feature type="turn" evidence="3">
    <location>
        <begin position="94"/>
        <end position="96"/>
    </location>
</feature>
<feature type="strand" evidence="3">
    <location>
        <begin position="98"/>
        <end position="100"/>
    </location>
</feature>
<feature type="helix" evidence="3">
    <location>
        <begin position="104"/>
        <end position="122"/>
    </location>
</feature>
<feature type="turn" evidence="3">
    <location>
        <begin position="136"/>
        <end position="138"/>
    </location>
</feature>
<feature type="strand" evidence="3">
    <location>
        <begin position="161"/>
        <end position="164"/>
    </location>
</feature>
<feature type="helix" evidence="3">
    <location>
        <begin position="170"/>
        <end position="177"/>
    </location>
</feature>
<feature type="helix" evidence="3">
    <location>
        <begin position="192"/>
        <end position="206"/>
    </location>
</feature>
<feature type="helix" evidence="3">
    <location>
        <begin position="213"/>
        <end position="215"/>
    </location>
</feature>
<feature type="helix" evidence="3">
    <location>
        <begin position="218"/>
        <end position="239"/>
    </location>
</feature>
<feature type="helix" evidence="3">
    <location>
        <begin position="249"/>
        <end position="258"/>
    </location>
</feature>
<dbReference type="EMBL" id="Z73274">
    <property type="protein sequence ID" value="CAA97667.1"/>
    <property type="molecule type" value="Genomic_DNA"/>
</dbReference>
<dbReference type="EMBL" id="U53876">
    <property type="protein sequence ID" value="AAB67545.1"/>
    <property type="molecule type" value="Genomic_DNA"/>
</dbReference>
<dbReference type="EMBL" id="BK006945">
    <property type="protein sequence ID" value="DAA09418.1"/>
    <property type="molecule type" value="Genomic_DNA"/>
</dbReference>
<dbReference type="PIR" id="S64938">
    <property type="entry name" value="S64938"/>
</dbReference>
<dbReference type="RefSeq" id="NP_013203.1">
    <property type="nucleotide sequence ID" value="NM_001181989.1"/>
</dbReference>
<dbReference type="PDB" id="8A3T">
    <property type="method" value="EM"/>
    <property type="resolution" value="3.50 A"/>
    <property type="chains" value="E=1-265"/>
</dbReference>
<dbReference type="PDB" id="8A5Y">
    <property type="method" value="EM"/>
    <property type="resolution" value="4.90 A"/>
    <property type="chains" value="E=1-265"/>
</dbReference>
<dbReference type="PDB" id="8A61">
    <property type="method" value="EM"/>
    <property type="resolution" value="5.40 A"/>
    <property type="chains" value="E=1-265"/>
</dbReference>
<dbReference type="PDBsum" id="8A3T"/>
<dbReference type="PDBsum" id="8A5Y"/>
<dbReference type="PDBsum" id="8A61"/>
<dbReference type="EMDB" id="EMD-15123"/>
<dbReference type="EMDB" id="EMD-15199"/>
<dbReference type="EMDB" id="EMD-15201"/>
<dbReference type="SMR" id="Q12107"/>
<dbReference type="BioGRID" id="31375">
    <property type="interactions" value="115"/>
</dbReference>
<dbReference type="ComplexPortal" id="CPX-756">
    <property type="entry name" value="Anaphase-Promoting core complex"/>
</dbReference>
<dbReference type="ComplexPortal" id="CPX-760">
    <property type="entry name" value="Anaphase-Promoting Complex, CDC20 variant"/>
</dbReference>
<dbReference type="ComplexPortal" id="CPX-761">
    <property type="entry name" value="Anaphase-Promoting Complex, CDH1 variant"/>
</dbReference>
<dbReference type="ComplexPortal" id="CPX-762">
    <property type="entry name" value="Anaphase-Promoting complex AMA1 variant"/>
</dbReference>
<dbReference type="DIP" id="DIP-1129N"/>
<dbReference type="FunCoup" id="Q12107">
    <property type="interactions" value="312"/>
</dbReference>
<dbReference type="IntAct" id="Q12107">
    <property type="interactions" value="20"/>
</dbReference>
<dbReference type="MINT" id="Q12107"/>
<dbReference type="STRING" id="4932.YLR102C"/>
<dbReference type="iPTMnet" id="Q12107"/>
<dbReference type="PaxDb" id="4932-YLR102C"/>
<dbReference type="PeptideAtlas" id="Q12107"/>
<dbReference type="EnsemblFungi" id="YLR102C_mRNA">
    <property type="protein sequence ID" value="YLR102C"/>
    <property type="gene ID" value="YLR102C"/>
</dbReference>
<dbReference type="GeneID" id="850792"/>
<dbReference type="KEGG" id="sce:YLR102C"/>
<dbReference type="AGR" id="SGD:S000004092"/>
<dbReference type="SGD" id="S000004092">
    <property type="gene designation" value="APC9"/>
</dbReference>
<dbReference type="VEuPathDB" id="FungiDB:YLR102C"/>
<dbReference type="eggNOG" id="ENOG502S206">
    <property type="taxonomic scope" value="Eukaryota"/>
</dbReference>
<dbReference type="HOGENOM" id="CLU_077720_0_0_1"/>
<dbReference type="InParanoid" id="Q12107"/>
<dbReference type="OMA" id="CYEEDNC"/>
<dbReference type="OrthoDB" id="4061647at2759"/>
<dbReference type="BioCyc" id="YEAST:G3O-32250-MONOMER"/>
<dbReference type="UniPathway" id="UPA00143"/>
<dbReference type="BioGRID-ORCS" id="850792">
    <property type="hits" value="1 hit in 10 CRISPR screens"/>
</dbReference>
<dbReference type="PRO" id="PR:Q12107"/>
<dbReference type="Proteomes" id="UP000002311">
    <property type="component" value="Chromosome XII"/>
</dbReference>
<dbReference type="RNAct" id="Q12107">
    <property type="molecule type" value="protein"/>
</dbReference>
<dbReference type="GO" id="GO:0005680">
    <property type="term" value="C:anaphase-promoting complex"/>
    <property type="evidence" value="ECO:0000314"/>
    <property type="project" value="SGD"/>
</dbReference>
<dbReference type="GO" id="GO:0005737">
    <property type="term" value="C:cytoplasm"/>
    <property type="evidence" value="ECO:0007669"/>
    <property type="project" value="UniProtKB-SubCell"/>
</dbReference>
<dbReference type="GO" id="GO:0031145">
    <property type="term" value="P:anaphase-promoting complex-dependent catabolic process"/>
    <property type="evidence" value="ECO:0000314"/>
    <property type="project" value="ComplexPortal"/>
</dbReference>
<dbReference type="GO" id="GO:0051301">
    <property type="term" value="P:cell division"/>
    <property type="evidence" value="ECO:0007669"/>
    <property type="project" value="UniProtKB-KW"/>
</dbReference>
<dbReference type="GO" id="GO:0006325">
    <property type="term" value="P:chromatin organization"/>
    <property type="evidence" value="ECO:0000316"/>
    <property type="project" value="SGD"/>
</dbReference>
<dbReference type="GO" id="GO:0016567">
    <property type="term" value="P:protein ubiquitination"/>
    <property type="evidence" value="ECO:0000314"/>
    <property type="project" value="ComplexPortal"/>
</dbReference>
<dbReference type="GO" id="GO:0051445">
    <property type="term" value="P:regulation of meiotic cell cycle"/>
    <property type="evidence" value="ECO:0000303"/>
    <property type="project" value="ComplexPortal"/>
</dbReference>
<dbReference type="GO" id="GO:0007346">
    <property type="term" value="P:regulation of mitotic cell cycle"/>
    <property type="evidence" value="ECO:0000303"/>
    <property type="project" value="ComplexPortal"/>
</dbReference>
<dbReference type="InterPro" id="IPR024274">
    <property type="entry name" value="APC9"/>
</dbReference>
<dbReference type="Pfam" id="PF12856">
    <property type="entry name" value="ANAPC9"/>
    <property type="match status" value="1"/>
</dbReference>
<accession>Q12107</accession>
<accession>D6VYA2</accession>
<comment type="function">
    <text evidence="2">Component of the anaphase promoting complex/cyclosome (APC/C), a cell cycle-regulated E3 ubiquitin-protein ligase complex that controls progression through mitosis and the G1 phase of the cell cycle. The APC/C is thought to confer substrate specificity and, in the presence of ubiquitin-conjugating E2 enzymes, it catalyzes the formation of protein-ubiquitin conjugates that are subsequently degraded by the 26S proteasome. In early mitosis, the APC/C is activated by CDC20 and targets securin PDS1, the B-type cyclin CLB5, and other anaphase inhibitory proteins for proteolysis, thereby triggering the separation of sister chromatids at the metaphase-to-anaphase transition. In late mitosis and in G1, degradation of CLB5 allows activation of the APC/C by CDH1, which is needed to destroy CDC20 and the B-type cyclin CLB2 to allow exit from mitosis and creating the low CDK state necessary for cytokinesis and for reforming prereplicative complexes in G1 prior to another round of replication.</text>
</comment>
<comment type="pathway">
    <text>Protein modification; protein ubiquitination.</text>
</comment>
<comment type="subunit">
    <text evidence="2">The APC/C is composed of at least 13 subunits that stay tightly associated throughout the cell cycle: APC1, APC2, APC4, APC5, APC9, APC11, CDC16, CDC23, CDC26, CDC27, DOC1, MND2 and SWM1.</text>
</comment>
<comment type="subcellular location">
    <subcellularLocation>
        <location evidence="1">Cytoplasm</location>
    </subcellularLocation>
    <subcellularLocation>
        <location evidence="1">Nucleus</location>
    </subcellularLocation>
</comment>
<evidence type="ECO:0000269" key="1">
    <source>
    </source>
</evidence>
<evidence type="ECO:0000269" key="2">
    <source>
    </source>
</evidence>
<evidence type="ECO:0007829" key="3">
    <source>
        <dbReference type="PDB" id="8A3T"/>
    </source>
</evidence>
<proteinExistence type="evidence at protein level"/>